<sequence>MGTFTLHQGQSNLIKSFFRNYYLNAELGLPNDMELREFALQPFGSDTYIRHLSFSSSEELRDYLVNRNLPLHLFYSSARYQLPAARDMEEKAWMGSDLLFDIDADHICKLRSIRFCPVCGNAITSEKCERDNVETLEYVEMTSECIKRGLEEARNLVEILEDDFGLKPKVYFSGNRGFHVQVDCYGDCALLDSDERKEIAEYVMGVGVPSYPGGGENAPGWVGRKNRGINGVTIDGQVTIDVKRLIRIPNSLHGKSGLIVKEVTNLDDFEFNEALSPFTGYTIFLPYISIETEVLSRNIKLNRGVPIKIESSIGIYLHLKNLGEVKAYVR</sequence>
<protein>
    <recommendedName>
        <fullName evidence="2">DNA primase small subunit PriS</fullName>
        <ecNumber evidence="2">2.7.7.-</ecNumber>
    </recommendedName>
</protein>
<evidence type="ECO:0000250" key="1"/>
<evidence type="ECO:0000255" key="2">
    <source>
        <dbReference type="HAMAP-Rule" id="MF_00700"/>
    </source>
</evidence>
<proteinExistence type="inferred from homology"/>
<reference key="1">
    <citation type="journal article" date="2009" name="Proc. Natl. Acad. Sci. U.S.A.">
        <title>Biogeography of the Sulfolobus islandicus pan-genome.</title>
        <authorList>
            <person name="Reno M.L."/>
            <person name="Held N.L."/>
            <person name="Fields C.J."/>
            <person name="Burke P.V."/>
            <person name="Whitaker R.J."/>
        </authorList>
    </citation>
    <scope>NUCLEOTIDE SEQUENCE [LARGE SCALE GENOMIC DNA]</scope>
    <source>
        <strain>M.14.25 / Kamchatka #1</strain>
    </source>
</reference>
<accession>C3MYF5</accession>
<gene>
    <name evidence="2" type="primary">priS</name>
    <name type="synonym">priA</name>
    <name type="ordered locus">M1425_1173</name>
</gene>
<name>PRIS_SACI4</name>
<comment type="function">
    <text evidence="2">Catalytic subunit of DNA primase, an RNA polymerase that catalyzes the synthesis of short RNA molecules used as primers for DNA polymerase during DNA replication. The small subunit contains the primase catalytic core and has DNA synthesis activity on its own. Binding to the large subunit stabilizes and modulates the activity, increasing the rate of DNA synthesis while decreasing the length of the DNA fragments, and conferring RNA synthesis capability. The DNA polymerase activity may enable DNA primase to also catalyze primer extension after primer synthesis. May also play a role in DNA repair.</text>
</comment>
<comment type="cofactor">
    <cofactor evidence="2">
        <name>Mg(2+)</name>
        <dbReference type="ChEBI" id="CHEBI:18420"/>
    </cofactor>
    <cofactor evidence="2">
        <name>Mn(2+)</name>
        <dbReference type="ChEBI" id="CHEBI:29035"/>
    </cofactor>
</comment>
<comment type="subunit">
    <text evidence="2">Heterodimer of a small subunit (PriS) and a large subunit (PriL).</text>
</comment>
<comment type="similarity">
    <text evidence="2">Belongs to the eukaryotic-type primase small subunit family.</text>
</comment>
<feature type="chain" id="PRO_1000212639" description="DNA primase small subunit PriS">
    <location>
        <begin position="1"/>
        <end position="330"/>
    </location>
</feature>
<feature type="active site" evidence="2">
    <location>
        <position position="101"/>
    </location>
</feature>
<feature type="active site" evidence="2">
    <location>
        <position position="103"/>
    </location>
</feature>
<feature type="active site" evidence="2">
    <location>
        <position position="235"/>
    </location>
</feature>
<feature type="binding site" evidence="1">
    <location>
        <position position="116"/>
    </location>
    <ligand>
        <name>Zn(2+)</name>
        <dbReference type="ChEBI" id="CHEBI:29105"/>
    </ligand>
</feature>
<feature type="binding site" evidence="1">
    <location>
        <position position="119"/>
    </location>
    <ligand>
        <name>Zn(2+)</name>
        <dbReference type="ChEBI" id="CHEBI:29105"/>
    </ligand>
</feature>
<feature type="binding site" evidence="1">
    <location>
        <position position="128"/>
    </location>
    <ligand>
        <name>Zn(2+)</name>
        <dbReference type="ChEBI" id="CHEBI:29105"/>
    </ligand>
</feature>
<feature type="binding site" evidence="1">
    <location>
        <position position="131"/>
    </location>
    <ligand>
        <name>Zn(2+)</name>
        <dbReference type="ChEBI" id="CHEBI:29105"/>
    </ligand>
</feature>
<keyword id="KW-0235">DNA replication</keyword>
<keyword id="KW-0240">DNA-directed RNA polymerase</keyword>
<keyword id="KW-0460">Magnesium</keyword>
<keyword id="KW-0464">Manganese</keyword>
<keyword id="KW-0479">Metal-binding</keyword>
<keyword id="KW-0548">Nucleotidyltransferase</keyword>
<keyword id="KW-0639">Primosome</keyword>
<keyword id="KW-0804">Transcription</keyword>
<keyword id="KW-0808">Transferase</keyword>
<keyword id="KW-0862">Zinc</keyword>
<organism>
    <name type="scientific">Saccharolobus islandicus (strain M.14.25 / Kamchatka #1)</name>
    <name type="common">Sulfolobus islandicus</name>
    <dbReference type="NCBI Taxonomy" id="427317"/>
    <lineage>
        <taxon>Archaea</taxon>
        <taxon>Thermoproteota</taxon>
        <taxon>Thermoprotei</taxon>
        <taxon>Sulfolobales</taxon>
        <taxon>Sulfolobaceae</taxon>
        <taxon>Saccharolobus</taxon>
    </lineage>
</organism>
<dbReference type="EC" id="2.7.7.-" evidence="2"/>
<dbReference type="EMBL" id="CP001400">
    <property type="protein sequence ID" value="ACP37934.1"/>
    <property type="molecule type" value="Genomic_DNA"/>
</dbReference>
<dbReference type="RefSeq" id="WP_012711195.1">
    <property type="nucleotide sequence ID" value="NC_012588.1"/>
</dbReference>
<dbReference type="SMR" id="C3MYF5"/>
<dbReference type="GeneID" id="84058561"/>
<dbReference type="KEGG" id="sia:M1425_1173"/>
<dbReference type="HOGENOM" id="CLU_056123_0_0_2"/>
<dbReference type="Proteomes" id="UP000001350">
    <property type="component" value="Chromosome"/>
</dbReference>
<dbReference type="GO" id="GO:0000428">
    <property type="term" value="C:DNA-directed RNA polymerase complex"/>
    <property type="evidence" value="ECO:0007669"/>
    <property type="project" value="UniProtKB-KW"/>
</dbReference>
<dbReference type="GO" id="GO:1990077">
    <property type="term" value="C:primosome complex"/>
    <property type="evidence" value="ECO:0007669"/>
    <property type="project" value="UniProtKB-KW"/>
</dbReference>
<dbReference type="GO" id="GO:0003899">
    <property type="term" value="F:DNA-directed RNA polymerase activity"/>
    <property type="evidence" value="ECO:0007669"/>
    <property type="project" value="InterPro"/>
</dbReference>
<dbReference type="GO" id="GO:0046872">
    <property type="term" value="F:metal ion binding"/>
    <property type="evidence" value="ECO:0007669"/>
    <property type="project" value="UniProtKB-KW"/>
</dbReference>
<dbReference type="GO" id="GO:0006269">
    <property type="term" value="P:DNA replication, synthesis of primer"/>
    <property type="evidence" value="ECO:0007669"/>
    <property type="project" value="UniProtKB-UniRule"/>
</dbReference>
<dbReference type="CDD" id="cd04860">
    <property type="entry name" value="AE_Prim_S"/>
    <property type="match status" value="1"/>
</dbReference>
<dbReference type="FunFam" id="3.90.920.10:FF:000006">
    <property type="entry name" value="DNA primase small subunit PriS"/>
    <property type="match status" value="1"/>
</dbReference>
<dbReference type="Gene3D" id="3.90.920.10">
    <property type="entry name" value="DNA primase, PRIM domain"/>
    <property type="match status" value="1"/>
</dbReference>
<dbReference type="HAMAP" id="MF_00700">
    <property type="entry name" value="DNA_primase_sml_arc"/>
    <property type="match status" value="1"/>
</dbReference>
<dbReference type="InterPro" id="IPR002755">
    <property type="entry name" value="DNA_primase_S"/>
</dbReference>
<dbReference type="InterPro" id="IPR014052">
    <property type="entry name" value="DNA_primase_ssu_euk/arc"/>
</dbReference>
<dbReference type="InterPro" id="IPR023639">
    <property type="entry name" value="DNA_primase_ssu_PriS"/>
</dbReference>
<dbReference type="NCBIfam" id="NF001641">
    <property type="entry name" value="PRK00419.1-3"/>
    <property type="match status" value="1"/>
</dbReference>
<dbReference type="PANTHER" id="PTHR10536">
    <property type="entry name" value="DNA PRIMASE SMALL SUBUNIT"/>
    <property type="match status" value="1"/>
</dbReference>
<dbReference type="Pfam" id="PF01896">
    <property type="entry name" value="DNA_primase_S"/>
    <property type="match status" value="1"/>
</dbReference>
<dbReference type="Pfam" id="PF20873">
    <property type="entry name" value="PriS_C"/>
    <property type="match status" value="1"/>
</dbReference>
<dbReference type="SUPFAM" id="SSF56747">
    <property type="entry name" value="Prim-pol domain"/>
    <property type="match status" value="1"/>
</dbReference>